<sequence>MSMIRRSNVFDPFSLDLWDPFDGFPFGSGSGSLFPRANSDAAAFAGARIDWKETPEAHVFKADVPGLKKEEVKVEVEDGNVLQISGERIKEQEEKTDKWHRVERSSGKFLRRFRLPENTKPEQIKASMENGVLTVTVPKEEPKKPDVKSIQITG</sequence>
<comment type="subunit">
    <text>May form oligomeric structures.</text>
</comment>
<comment type="subcellular location">
    <subcellularLocation>
        <location evidence="4">Cytoplasm</location>
    </subcellularLocation>
</comment>
<comment type="induction">
    <text evidence="2 3">By heat shock, arsenic, azetidine-2-carboxylate, cadmium, copper, ethanol and hydrogen peroxide.</text>
</comment>
<comment type="similarity">
    <text evidence="1">Belongs to the small heat shock protein (HSP20) family.</text>
</comment>
<comment type="sequence caution" evidence="4">
    <conflict type="frameshift">
        <sequence resource="EMBL-CDS" id="AAB46378"/>
    </conflict>
</comment>
<proteinExistence type="evidence at transcript level"/>
<accession>P31673</accession>
<accession>A0A0P0VVV9</accession>
<accession>P93439</accession>
<accession>Q10NK3</accession>
<accession>Q40698</accession>
<accession>Q84Q73</accession>
<gene>
    <name type="primary">HSP17.4</name>
    <name type="ordered locus">Os03g0266900</name>
    <name type="ordered locus">LOC_Os03g16020</name>
    <name type="ORF">OJ1364E02.10</name>
    <name type="ORF">OsJ_10261</name>
</gene>
<name>HS174_ORYSJ</name>
<dbReference type="EMBL" id="M80186">
    <property type="protein sequence ID" value="AAB46378.1"/>
    <property type="status" value="ALT_FRAME"/>
    <property type="molecule type" value="mRNA"/>
</dbReference>
<dbReference type="EMBL" id="U83669">
    <property type="protein sequence ID" value="AAC78392.1"/>
    <property type="molecule type" value="Genomic_DNA"/>
</dbReference>
<dbReference type="EMBL" id="D12635">
    <property type="protein sequence ID" value="BAA02160.1"/>
    <property type="molecule type" value="mRNA"/>
</dbReference>
<dbReference type="EMBL" id="EU846992">
    <property type="protein sequence ID" value="ACJ54896.1"/>
    <property type="molecule type" value="mRNA"/>
</dbReference>
<dbReference type="EMBL" id="AC135208">
    <property type="protein sequence ID" value="AAP06882.1"/>
    <property type="molecule type" value="Genomic_DNA"/>
</dbReference>
<dbReference type="EMBL" id="DP000009">
    <property type="protein sequence ID" value="ABF95155.1"/>
    <property type="molecule type" value="Genomic_DNA"/>
</dbReference>
<dbReference type="EMBL" id="AP008209">
    <property type="protein sequence ID" value="BAF11574.1"/>
    <property type="molecule type" value="Genomic_DNA"/>
</dbReference>
<dbReference type="EMBL" id="AP014959">
    <property type="protein sequence ID" value="BAS83420.1"/>
    <property type="molecule type" value="Genomic_DNA"/>
</dbReference>
<dbReference type="EMBL" id="CM000140">
    <property type="protein sequence ID" value="EAZ26378.1"/>
    <property type="molecule type" value="Genomic_DNA"/>
</dbReference>
<dbReference type="EMBL" id="AK119243">
    <property type="protein sequence ID" value="BAG99599.1"/>
    <property type="molecule type" value="mRNA"/>
</dbReference>
<dbReference type="EMBL" id="AK119717">
    <property type="protein sequence ID" value="BAG99764.1"/>
    <property type="molecule type" value="mRNA"/>
</dbReference>
<dbReference type="PIR" id="JS0710">
    <property type="entry name" value="JS0710"/>
</dbReference>
<dbReference type="PIR" id="S24396">
    <property type="entry name" value="S24396"/>
</dbReference>
<dbReference type="RefSeq" id="XP_015631117.1">
    <property type="nucleotide sequence ID" value="XM_015775631.1"/>
</dbReference>
<dbReference type="SMR" id="P31673"/>
<dbReference type="FunCoup" id="P31673">
    <property type="interactions" value="449"/>
</dbReference>
<dbReference type="STRING" id="39947.P31673"/>
<dbReference type="PaxDb" id="39947-P31673"/>
<dbReference type="EnsemblPlants" id="Os03t0266900-02">
    <property type="protein sequence ID" value="Os03t0266900-02"/>
    <property type="gene ID" value="Os03g0266900"/>
</dbReference>
<dbReference type="Gramene" id="Os03t0266900-02">
    <property type="protein sequence ID" value="Os03t0266900-02"/>
    <property type="gene ID" value="Os03g0266900"/>
</dbReference>
<dbReference type="KEGG" id="dosa:Os03g0266900"/>
<dbReference type="eggNOG" id="KOG0710">
    <property type="taxonomic scope" value="Eukaryota"/>
</dbReference>
<dbReference type="HOGENOM" id="CLU_046737_5_0_1"/>
<dbReference type="InParanoid" id="P31673"/>
<dbReference type="OMA" id="PFQGFAF"/>
<dbReference type="OrthoDB" id="5511210at2759"/>
<dbReference type="Proteomes" id="UP000000763">
    <property type="component" value="Chromosome 3"/>
</dbReference>
<dbReference type="Proteomes" id="UP000007752">
    <property type="component" value="Chromosome 3"/>
</dbReference>
<dbReference type="Proteomes" id="UP000059680">
    <property type="component" value="Chromosome 3"/>
</dbReference>
<dbReference type="GO" id="GO:0005737">
    <property type="term" value="C:cytoplasm"/>
    <property type="evidence" value="ECO:0007669"/>
    <property type="project" value="UniProtKB-SubCell"/>
</dbReference>
<dbReference type="GO" id="GO:0051082">
    <property type="term" value="F:unfolded protein binding"/>
    <property type="evidence" value="ECO:0000318"/>
    <property type="project" value="GO_Central"/>
</dbReference>
<dbReference type="GO" id="GO:0051259">
    <property type="term" value="P:protein complex oligomerization"/>
    <property type="evidence" value="ECO:0000318"/>
    <property type="project" value="GO_Central"/>
</dbReference>
<dbReference type="GO" id="GO:0006457">
    <property type="term" value="P:protein folding"/>
    <property type="evidence" value="ECO:0000318"/>
    <property type="project" value="GO_Central"/>
</dbReference>
<dbReference type="GO" id="GO:0046685">
    <property type="term" value="P:response to arsenic-containing substance"/>
    <property type="evidence" value="ECO:0000270"/>
    <property type="project" value="UniProtKB"/>
</dbReference>
<dbReference type="GO" id="GO:0046686">
    <property type="term" value="P:response to cadmium ion"/>
    <property type="evidence" value="ECO:0000270"/>
    <property type="project" value="UniProtKB"/>
</dbReference>
<dbReference type="GO" id="GO:0046688">
    <property type="term" value="P:response to copper ion"/>
    <property type="evidence" value="ECO:0000270"/>
    <property type="project" value="UniProtKB"/>
</dbReference>
<dbReference type="GO" id="GO:0045471">
    <property type="term" value="P:response to ethanol"/>
    <property type="evidence" value="ECO:0000270"/>
    <property type="project" value="UniProtKB"/>
</dbReference>
<dbReference type="GO" id="GO:0009408">
    <property type="term" value="P:response to heat"/>
    <property type="evidence" value="ECO:0000270"/>
    <property type="project" value="UniProtKB"/>
</dbReference>
<dbReference type="GO" id="GO:0042542">
    <property type="term" value="P:response to hydrogen peroxide"/>
    <property type="evidence" value="ECO:0000270"/>
    <property type="project" value="UniProtKB"/>
</dbReference>
<dbReference type="GO" id="GO:0009651">
    <property type="term" value="P:response to salt stress"/>
    <property type="evidence" value="ECO:0000318"/>
    <property type="project" value="GO_Central"/>
</dbReference>
<dbReference type="CDD" id="cd06472">
    <property type="entry name" value="ACD_ScHsp26_like"/>
    <property type="match status" value="1"/>
</dbReference>
<dbReference type="FunFam" id="2.60.40.790:FF:000007">
    <property type="entry name" value="17.4 kDa class I heat shock protein"/>
    <property type="match status" value="1"/>
</dbReference>
<dbReference type="Gene3D" id="2.60.40.790">
    <property type="match status" value="1"/>
</dbReference>
<dbReference type="InterPro" id="IPR002068">
    <property type="entry name" value="A-crystallin/Hsp20_dom"/>
</dbReference>
<dbReference type="InterPro" id="IPR007052">
    <property type="entry name" value="CS_dom"/>
</dbReference>
<dbReference type="InterPro" id="IPR008978">
    <property type="entry name" value="HSP20-like_chaperone"/>
</dbReference>
<dbReference type="InterPro" id="IPR031107">
    <property type="entry name" value="Small_HSP"/>
</dbReference>
<dbReference type="PANTHER" id="PTHR11527">
    <property type="entry name" value="HEAT-SHOCK PROTEIN 20 FAMILY MEMBER"/>
    <property type="match status" value="1"/>
</dbReference>
<dbReference type="Pfam" id="PF00011">
    <property type="entry name" value="HSP20"/>
    <property type="match status" value="1"/>
</dbReference>
<dbReference type="SUPFAM" id="SSF49764">
    <property type="entry name" value="HSP20-like chaperones"/>
    <property type="match status" value="1"/>
</dbReference>
<dbReference type="PROSITE" id="PS01031">
    <property type="entry name" value="SHSP"/>
    <property type="match status" value="1"/>
</dbReference>
<reference key="1">
    <citation type="journal article" date="1992" name="Plant Mol. Biol.">
        <title>Two rice (Oryza sativa) full-length cDNA clones encoding low-molecular-weight heat-shock proteins.</title>
        <authorList>
            <person name="Tseng T.-S."/>
            <person name="Yeh K.-W."/>
            <person name="Yeh C.-H."/>
            <person name="Chang F.-C."/>
            <person name="Chen Y.-M."/>
            <person name="Lin C.-Y."/>
        </authorList>
    </citation>
    <scope>NUCLEOTIDE SEQUENCE [MRNA]</scope>
</reference>
<reference key="2">
    <citation type="online journal article" date="1998" name="Plant Gene Register">
        <title>Structure of Oryza sativa genes encoding three class I low molecular mass heat shock proteins.</title>
        <authorList>
            <person name="Guan J.-C."/>
            <person name="Chang F.-C."/>
            <person name="Tseng T.-S."/>
            <person name="Chang P.-F.L."/>
            <person name="Yeh K.-W."/>
            <person name="Chen Y.-M."/>
            <person name="Lin C.-Y."/>
        </authorList>
        <locator>PGR98-178</locator>
    </citation>
    <scope>NUCLEOTIDE SEQUENCE [GENOMIC DNA]</scope>
    <source>
        <strain>cv. Tainung 67</strain>
    </source>
</reference>
<reference key="3">
    <citation type="submission" date="1992-07" db="EMBL/GenBank/DDBJ databases">
        <title>A Oryza sativa cDNA clone encoding a low-molecular-weight heat shock protein.</title>
        <authorList>
            <person name="Nishi R."/>
            <person name="Hashimoto H."/>
            <person name="Uchimiya H."/>
            <person name="Kato A."/>
        </authorList>
    </citation>
    <scope>NUCLEOTIDE SEQUENCE [MRNA]</scope>
    <source>
        <strain>cv. Yamahoushi</strain>
    </source>
</reference>
<reference key="4">
    <citation type="submission" date="2008-06" db="EMBL/GenBank/DDBJ databases">
        <title>Molecular cloning of 17.4kDa heat shock protein gene in rice.</title>
        <authorList>
            <person name="Yoon U.H."/>
            <person name="Kim Y.H."/>
        </authorList>
    </citation>
    <scope>NUCLEOTIDE SEQUENCE [MRNA]</scope>
    <source>
        <strain>cv. Ilpoombyeo</strain>
        <tissue>Seed</tissue>
    </source>
</reference>
<reference key="5">
    <citation type="journal article" date="2005" name="Genome Res.">
        <title>Sequence, annotation, and analysis of synteny between rice chromosome 3 and diverged grass species.</title>
        <authorList>
            <consortium name="The rice chromosome 3 sequencing consortium"/>
            <person name="Buell C.R."/>
            <person name="Yuan Q."/>
            <person name="Ouyang S."/>
            <person name="Liu J."/>
            <person name="Zhu W."/>
            <person name="Wang A."/>
            <person name="Maiti R."/>
            <person name="Haas B."/>
            <person name="Wortman J."/>
            <person name="Pertea M."/>
            <person name="Jones K.M."/>
            <person name="Kim M."/>
            <person name="Overton L."/>
            <person name="Tsitrin T."/>
            <person name="Fadrosh D."/>
            <person name="Bera J."/>
            <person name="Weaver B."/>
            <person name="Jin S."/>
            <person name="Johri S."/>
            <person name="Reardon M."/>
            <person name="Webb K."/>
            <person name="Hill J."/>
            <person name="Moffat K."/>
            <person name="Tallon L."/>
            <person name="Van Aken S."/>
            <person name="Lewis M."/>
            <person name="Utterback T."/>
            <person name="Feldblyum T."/>
            <person name="Zismann V."/>
            <person name="Iobst S."/>
            <person name="Hsiao J."/>
            <person name="de Vazeille A.R."/>
            <person name="Salzberg S.L."/>
            <person name="White O."/>
            <person name="Fraser C.M."/>
            <person name="Yu Y."/>
            <person name="Kim H."/>
            <person name="Rambo T."/>
            <person name="Currie J."/>
            <person name="Collura K."/>
            <person name="Kernodle-Thompson S."/>
            <person name="Wei F."/>
            <person name="Kudrna K."/>
            <person name="Ammiraju J.S.S."/>
            <person name="Luo M."/>
            <person name="Goicoechea J.L."/>
            <person name="Wing R.A."/>
            <person name="Henry D."/>
            <person name="Oates R."/>
            <person name="Palmer M."/>
            <person name="Pries G."/>
            <person name="Saski C."/>
            <person name="Simmons J."/>
            <person name="Soderlund C."/>
            <person name="Nelson W."/>
            <person name="de la Bastide M."/>
            <person name="Spiegel L."/>
            <person name="Nascimento L."/>
            <person name="Huang E."/>
            <person name="Preston R."/>
            <person name="Zutavern T."/>
            <person name="Palmer L."/>
            <person name="O'Shaughnessy A."/>
            <person name="Dike S."/>
            <person name="McCombie W.R."/>
            <person name="Minx P."/>
            <person name="Cordum H."/>
            <person name="Wilson R."/>
            <person name="Jin W."/>
            <person name="Lee H.R."/>
            <person name="Jiang J."/>
            <person name="Jackson S."/>
        </authorList>
    </citation>
    <scope>NUCLEOTIDE SEQUENCE [LARGE SCALE GENOMIC DNA]</scope>
    <source>
        <strain>cv. Nipponbare</strain>
    </source>
</reference>
<reference key="6">
    <citation type="journal article" date="2005" name="Nature">
        <title>The map-based sequence of the rice genome.</title>
        <authorList>
            <consortium name="International rice genome sequencing project (IRGSP)"/>
        </authorList>
    </citation>
    <scope>NUCLEOTIDE SEQUENCE [LARGE SCALE GENOMIC DNA]</scope>
    <source>
        <strain>cv. Nipponbare</strain>
    </source>
</reference>
<reference key="7">
    <citation type="journal article" date="2008" name="Nucleic Acids Res.">
        <title>The rice annotation project database (RAP-DB): 2008 update.</title>
        <authorList>
            <consortium name="The rice annotation project (RAP)"/>
        </authorList>
    </citation>
    <scope>GENOME REANNOTATION</scope>
    <source>
        <strain>cv. Nipponbare</strain>
    </source>
</reference>
<reference key="8">
    <citation type="journal article" date="2013" name="Rice">
        <title>Improvement of the Oryza sativa Nipponbare reference genome using next generation sequence and optical map data.</title>
        <authorList>
            <person name="Kawahara Y."/>
            <person name="de la Bastide M."/>
            <person name="Hamilton J.P."/>
            <person name="Kanamori H."/>
            <person name="McCombie W.R."/>
            <person name="Ouyang S."/>
            <person name="Schwartz D.C."/>
            <person name="Tanaka T."/>
            <person name="Wu J."/>
            <person name="Zhou S."/>
            <person name="Childs K.L."/>
            <person name="Davidson R.M."/>
            <person name="Lin H."/>
            <person name="Quesada-Ocampo L."/>
            <person name="Vaillancourt B."/>
            <person name="Sakai H."/>
            <person name="Lee S.S."/>
            <person name="Kim J."/>
            <person name="Numa H."/>
            <person name="Itoh T."/>
            <person name="Buell C.R."/>
            <person name="Matsumoto T."/>
        </authorList>
    </citation>
    <scope>GENOME REANNOTATION</scope>
    <source>
        <strain>cv. Nipponbare</strain>
    </source>
</reference>
<reference key="9">
    <citation type="journal article" date="2005" name="PLoS Biol.">
        <title>The genomes of Oryza sativa: a history of duplications.</title>
        <authorList>
            <person name="Yu J."/>
            <person name="Wang J."/>
            <person name="Lin W."/>
            <person name="Li S."/>
            <person name="Li H."/>
            <person name="Zhou J."/>
            <person name="Ni P."/>
            <person name="Dong W."/>
            <person name="Hu S."/>
            <person name="Zeng C."/>
            <person name="Zhang J."/>
            <person name="Zhang Y."/>
            <person name="Li R."/>
            <person name="Xu Z."/>
            <person name="Li S."/>
            <person name="Li X."/>
            <person name="Zheng H."/>
            <person name="Cong L."/>
            <person name="Lin L."/>
            <person name="Yin J."/>
            <person name="Geng J."/>
            <person name="Li G."/>
            <person name="Shi J."/>
            <person name="Liu J."/>
            <person name="Lv H."/>
            <person name="Li J."/>
            <person name="Wang J."/>
            <person name="Deng Y."/>
            <person name="Ran L."/>
            <person name="Shi X."/>
            <person name="Wang X."/>
            <person name="Wu Q."/>
            <person name="Li C."/>
            <person name="Ren X."/>
            <person name="Wang J."/>
            <person name="Wang X."/>
            <person name="Li D."/>
            <person name="Liu D."/>
            <person name="Zhang X."/>
            <person name="Ji Z."/>
            <person name="Zhao W."/>
            <person name="Sun Y."/>
            <person name="Zhang Z."/>
            <person name="Bao J."/>
            <person name="Han Y."/>
            <person name="Dong L."/>
            <person name="Ji J."/>
            <person name="Chen P."/>
            <person name="Wu S."/>
            <person name="Liu J."/>
            <person name="Xiao Y."/>
            <person name="Bu D."/>
            <person name="Tan J."/>
            <person name="Yang L."/>
            <person name="Ye C."/>
            <person name="Zhang J."/>
            <person name="Xu J."/>
            <person name="Zhou Y."/>
            <person name="Yu Y."/>
            <person name="Zhang B."/>
            <person name="Zhuang S."/>
            <person name="Wei H."/>
            <person name="Liu B."/>
            <person name="Lei M."/>
            <person name="Yu H."/>
            <person name="Li Y."/>
            <person name="Xu H."/>
            <person name="Wei S."/>
            <person name="He X."/>
            <person name="Fang L."/>
            <person name="Zhang Z."/>
            <person name="Zhang Y."/>
            <person name="Huang X."/>
            <person name="Su Z."/>
            <person name="Tong W."/>
            <person name="Li J."/>
            <person name="Tong Z."/>
            <person name="Li S."/>
            <person name="Ye J."/>
            <person name="Wang L."/>
            <person name="Fang L."/>
            <person name="Lei T."/>
            <person name="Chen C.-S."/>
            <person name="Chen H.-C."/>
            <person name="Xu Z."/>
            <person name="Li H."/>
            <person name="Huang H."/>
            <person name="Zhang F."/>
            <person name="Xu H."/>
            <person name="Li N."/>
            <person name="Zhao C."/>
            <person name="Li S."/>
            <person name="Dong L."/>
            <person name="Huang Y."/>
            <person name="Li L."/>
            <person name="Xi Y."/>
            <person name="Qi Q."/>
            <person name="Li W."/>
            <person name="Zhang B."/>
            <person name="Hu W."/>
            <person name="Zhang Y."/>
            <person name="Tian X."/>
            <person name="Jiao Y."/>
            <person name="Liang X."/>
            <person name="Jin J."/>
            <person name="Gao L."/>
            <person name="Zheng W."/>
            <person name="Hao B."/>
            <person name="Liu S.-M."/>
            <person name="Wang W."/>
            <person name="Yuan L."/>
            <person name="Cao M."/>
            <person name="McDermott J."/>
            <person name="Samudrala R."/>
            <person name="Wang J."/>
            <person name="Wong G.K.-S."/>
            <person name="Yang H."/>
        </authorList>
    </citation>
    <scope>NUCLEOTIDE SEQUENCE [LARGE SCALE GENOMIC DNA]</scope>
    <source>
        <strain>cv. Nipponbare</strain>
    </source>
</reference>
<reference key="10">
    <citation type="journal article" date="2003" name="Science">
        <title>Collection, mapping, and annotation of over 28,000 cDNA clones from japonica rice.</title>
        <authorList>
            <consortium name="The rice full-length cDNA consortium"/>
        </authorList>
    </citation>
    <scope>NUCLEOTIDE SEQUENCE [LARGE SCALE MRNA]</scope>
    <source>
        <strain>cv. Nipponbare</strain>
    </source>
</reference>
<reference key="11">
    <citation type="journal article" date="2004" name="Plant Mol. Biol.">
        <title>Characterization of the genomic structures and selective expression profiles of nine class I small heat shock protein genes clustered on two chromosomes in rice (Oryza sativa L.).</title>
        <authorList>
            <person name="Guan J.-C."/>
            <person name="Jinn T.-L."/>
            <person name="Yeh C.-H."/>
            <person name="Feng S.-P."/>
            <person name="Chen Y.-M."/>
            <person name="Lin C.-Y."/>
        </authorList>
    </citation>
    <scope>INDUCTION</scope>
</reference>
<reference key="12">
    <citation type="journal article" date="2009" name="BMC Genomics">
        <title>Rice sHsp genes: genomic organization and expression profiling under stress and development.</title>
        <authorList>
            <person name="Sarkar N.K."/>
            <person name="Kim Y.-K."/>
            <person name="Grover A."/>
        </authorList>
    </citation>
    <scope>INDUCTION</scope>
    <scope>GENE FAMILY</scope>
</reference>
<organism>
    <name type="scientific">Oryza sativa subsp. japonica</name>
    <name type="common">Rice</name>
    <dbReference type="NCBI Taxonomy" id="39947"/>
    <lineage>
        <taxon>Eukaryota</taxon>
        <taxon>Viridiplantae</taxon>
        <taxon>Streptophyta</taxon>
        <taxon>Embryophyta</taxon>
        <taxon>Tracheophyta</taxon>
        <taxon>Spermatophyta</taxon>
        <taxon>Magnoliopsida</taxon>
        <taxon>Liliopsida</taxon>
        <taxon>Poales</taxon>
        <taxon>Poaceae</taxon>
        <taxon>BOP clade</taxon>
        <taxon>Oryzoideae</taxon>
        <taxon>Oryzeae</taxon>
        <taxon>Oryzinae</taxon>
        <taxon>Oryza</taxon>
        <taxon>Oryza sativa</taxon>
    </lineage>
</organism>
<protein>
    <recommendedName>
        <fullName>17.4 kDa class I heat shock protein</fullName>
    </recommendedName>
    <alternativeName>
        <fullName>17.4 kDa heat shock protein</fullName>
        <shortName>OsHsp17.4</shortName>
    </alternativeName>
</protein>
<evidence type="ECO:0000255" key="1">
    <source>
        <dbReference type="PROSITE-ProRule" id="PRU00285"/>
    </source>
</evidence>
<evidence type="ECO:0000269" key="2">
    <source>
    </source>
</evidence>
<evidence type="ECO:0000269" key="3">
    <source>
    </source>
</evidence>
<evidence type="ECO:0000305" key="4"/>
<keyword id="KW-0963">Cytoplasm</keyword>
<keyword id="KW-1185">Reference proteome</keyword>
<keyword id="KW-0346">Stress response</keyword>
<feature type="chain" id="PRO_0000125981" description="17.4 kDa class I heat shock protein">
    <location>
        <begin position="1"/>
        <end position="154"/>
    </location>
</feature>
<feature type="domain" description="sHSP" evidence="1">
    <location>
        <begin position="40"/>
        <end position="154"/>
    </location>
</feature>
<feature type="sequence conflict" description="In Ref. 3; BAA02160." evidence="4" ref="3">
    <original>N</original>
    <variation>D</variation>
    <location>
        <position position="118"/>
    </location>
</feature>